<gene>
    <name type="primary">RNASE6</name>
</gene>
<organism>
    <name type="scientific">Pan troglodytes</name>
    <name type="common">Chimpanzee</name>
    <dbReference type="NCBI Taxonomy" id="9598"/>
    <lineage>
        <taxon>Eukaryota</taxon>
        <taxon>Metazoa</taxon>
        <taxon>Chordata</taxon>
        <taxon>Craniata</taxon>
        <taxon>Vertebrata</taxon>
        <taxon>Euteleostomi</taxon>
        <taxon>Mammalia</taxon>
        <taxon>Eutheria</taxon>
        <taxon>Euarchontoglires</taxon>
        <taxon>Primates</taxon>
        <taxon>Haplorrhini</taxon>
        <taxon>Catarrhini</taxon>
        <taxon>Hominidae</taxon>
        <taxon>Pan</taxon>
    </lineage>
</organism>
<proteinExistence type="inferred from homology"/>
<dbReference type="EC" id="3.1.27.-"/>
<dbReference type="EMBL" id="AF037081">
    <property type="protein sequence ID" value="AAB94743.1"/>
    <property type="molecule type" value="Genomic_DNA"/>
</dbReference>
<dbReference type="RefSeq" id="NP_001009132.1">
    <property type="nucleotide sequence ID" value="NM_001009132.1"/>
</dbReference>
<dbReference type="SMR" id="O46525"/>
<dbReference type="FunCoup" id="O46525">
    <property type="interactions" value="43"/>
</dbReference>
<dbReference type="STRING" id="9598.ENSPTRP00000010358"/>
<dbReference type="GlyCosmos" id="O46525">
    <property type="glycosylation" value="1 site, No reported glycans"/>
</dbReference>
<dbReference type="PaxDb" id="9598-ENSPTRP00000010358"/>
<dbReference type="GeneID" id="473324"/>
<dbReference type="KEGG" id="ptr:473324"/>
<dbReference type="CTD" id="6039"/>
<dbReference type="eggNOG" id="ENOG502TDZ3">
    <property type="taxonomic scope" value="Eukaryota"/>
</dbReference>
<dbReference type="InParanoid" id="O46525"/>
<dbReference type="Proteomes" id="UP000002277">
    <property type="component" value="Unplaced"/>
</dbReference>
<dbReference type="GO" id="GO:0005615">
    <property type="term" value="C:extracellular space"/>
    <property type="evidence" value="ECO:0000318"/>
    <property type="project" value="GO_Central"/>
</dbReference>
<dbReference type="GO" id="GO:0005764">
    <property type="term" value="C:lysosome"/>
    <property type="evidence" value="ECO:0007669"/>
    <property type="project" value="UniProtKB-SubCell"/>
</dbReference>
<dbReference type="GO" id="GO:0004519">
    <property type="term" value="F:endonuclease activity"/>
    <property type="evidence" value="ECO:0007669"/>
    <property type="project" value="UniProtKB-KW"/>
</dbReference>
<dbReference type="GO" id="GO:0003676">
    <property type="term" value="F:nucleic acid binding"/>
    <property type="evidence" value="ECO:0007669"/>
    <property type="project" value="InterPro"/>
</dbReference>
<dbReference type="GO" id="GO:0004540">
    <property type="term" value="F:RNA nuclease activity"/>
    <property type="evidence" value="ECO:0000318"/>
    <property type="project" value="GO_Central"/>
</dbReference>
<dbReference type="GO" id="GO:0019731">
    <property type="term" value="P:antibacterial humoral response"/>
    <property type="evidence" value="ECO:0000318"/>
    <property type="project" value="GO_Central"/>
</dbReference>
<dbReference type="GO" id="GO:0061844">
    <property type="term" value="P:antimicrobial humoral immune response mediated by antimicrobial peptide"/>
    <property type="evidence" value="ECO:0000318"/>
    <property type="project" value="GO_Central"/>
</dbReference>
<dbReference type="GO" id="GO:0050829">
    <property type="term" value="P:defense response to Gram-negative bacterium"/>
    <property type="evidence" value="ECO:0000318"/>
    <property type="project" value="GO_Central"/>
</dbReference>
<dbReference type="GO" id="GO:0050830">
    <property type="term" value="P:defense response to Gram-positive bacterium"/>
    <property type="evidence" value="ECO:0000318"/>
    <property type="project" value="GO_Central"/>
</dbReference>
<dbReference type="GO" id="GO:0045087">
    <property type="term" value="P:innate immune response"/>
    <property type="evidence" value="ECO:0000318"/>
    <property type="project" value="GO_Central"/>
</dbReference>
<dbReference type="CDD" id="cd06265">
    <property type="entry name" value="RNase_A_canonical"/>
    <property type="match status" value="1"/>
</dbReference>
<dbReference type="FunFam" id="3.10.130.10:FF:000001">
    <property type="entry name" value="Ribonuclease pancreatic"/>
    <property type="match status" value="1"/>
</dbReference>
<dbReference type="Gene3D" id="3.10.130.10">
    <property type="entry name" value="Ribonuclease A-like domain"/>
    <property type="match status" value="1"/>
</dbReference>
<dbReference type="InterPro" id="IPR001427">
    <property type="entry name" value="RNaseA"/>
</dbReference>
<dbReference type="InterPro" id="IPR036816">
    <property type="entry name" value="RNaseA-like_dom_sf"/>
</dbReference>
<dbReference type="InterPro" id="IPR023411">
    <property type="entry name" value="RNaseA_AS"/>
</dbReference>
<dbReference type="InterPro" id="IPR023412">
    <property type="entry name" value="RNaseA_domain"/>
</dbReference>
<dbReference type="PANTHER" id="PTHR11437">
    <property type="entry name" value="RIBONUCLEASE"/>
    <property type="match status" value="1"/>
</dbReference>
<dbReference type="PANTHER" id="PTHR11437:SF4">
    <property type="entry name" value="RIBONUCLEASE K6"/>
    <property type="match status" value="1"/>
</dbReference>
<dbReference type="Pfam" id="PF00074">
    <property type="entry name" value="RnaseA"/>
    <property type="match status" value="1"/>
</dbReference>
<dbReference type="PRINTS" id="PR00794">
    <property type="entry name" value="RIBONUCLEASE"/>
</dbReference>
<dbReference type="SMART" id="SM00092">
    <property type="entry name" value="RNAse_Pc"/>
    <property type="match status" value="1"/>
</dbReference>
<dbReference type="SUPFAM" id="SSF54076">
    <property type="entry name" value="RNase A-like"/>
    <property type="match status" value="1"/>
</dbReference>
<dbReference type="PROSITE" id="PS00127">
    <property type="entry name" value="RNASE_PANCREATIC"/>
    <property type="match status" value="1"/>
</dbReference>
<evidence type="ECO:0000250" key="1"/>
<evidence type="ECO:0000250" key="2">
    <source>
        <dbReference type="UniProtKB" id="Q64438"/>
    </source>
</evidence>
<evidence type="ECO:0000250" key="3">
    <source>
        <dbReference type="UniProtKB" id="Q93091"/>
    </source>
</evidence>
<evidence type="ECO:0000250" key="4">
    <source>
        <dbReference type="UniProtKB" id="Q9H1E1"/>
    </source>
</evidence>
<evidence type="ECO:0000255" key="5"/>
<evidence type="ECO:0000305" key="6"/>
<protein>
    <recommendedName>
        <fullName>Ribonuclease K6</fullName>
        <shortName>RNase K6</shortName>
        <ecNumber>3.1.27.-</ecNumber>
    </recommendedName>
</protein>
<reference key="1">
    <citation type="journal article" date="1998" name="Genome Res.">
        <title>Ribonuclease k6: chromosomal mapping and divergent rates of evolution within the RNase A gene superfamily.</title>
        <authorList>
            <person name="Deming M.S."/>
            <person name="Dyer K.D."/>
            <person name="Bankier A.T."/>
            <person name="Piper M.B."/>
            <person name="Dear P.H."/>
            <person name="Rosenberg H.F."/>
        </authorList>
    </citation>
    <scope>NUCLEOTIDE SEQUENCE [GENOMIC DNA]</scope>
</reference>
<keyword id="KW-0044">Antibiotic</keyword>
<keyword id="KW-0929">Antimicrobial</keyword>
<keyword id="KW-1015">Disulfide bond</keyword>
<keyword id="KW-0255">Endonuclease</keyword>
<keyword id="KW-0325">Glycoprotein</keyword>
<keyword id="KW-0378">Hydrolase</keyword>
<keyword id="KW-0458">Lysosome</keyword>
<keyword id="KW-0540">Nuclease</keyword>
<keyword id="KW-1185">Reference proteome</keyword>
<keyword id="KW-0964">Secreted</keyword>
<keyword id="KW-0732">Signal</keyword>
<accession>O46525</accession>
<sequence length="150" mass="17166">MVLCFPLLLLLLVLWGPVCPLHAWPKRLTKAHWFEIQHIQPSPLQCNRAMSGINNYAQHCKHQNTFLHDSFQNVAAVCDLLSIVCKNRRHNCHQSSKPVNMTDCRLTSGKYPQCRYSAAAQYKFFIVACDPPQKSDPPYKLVPVHLDSIL</sequence>
<feature type="signal peptide" evidence="1">
    <location>
        <begin position="1"/>
        <end position="23"/>
    </location>
</feature>
<feature type="chain" id="PRO_0000030895" description="Ribonuclease K6">
    <location>
        <begin position="24"/>
        <end position="150"/>
    </location>
</feature>
<feature type="active site" description="Proton acceptor" evidence="2">
    <location>
        <position position="38"/>
    </location>
</feature>
<feature type="active site" description="Proton donor" evidence="2">
    <location>
        <position position="145"/>
    </location>
</feature>
<feature type="binding site" evidence="1">
    <location>
        <begin position="61"/>
        <end position="65"/>
    </location>
    <ligand>
        <name>substrate</name>
    </ligand>
</feature>
<feature type="binding site" evidence="1">
    <location>
        <position position="86"/>
    </location>
    <ligand>
        <name>substrate</name>
    </ligand>
</feature>
<feature type="binding site" evidence="1">
    <location>
        <position position="105"/>
    </location>
    <ligand>
        <name>substrate</name>
    </ligand>
</feature>
<feature type="site" description="Facilitates cleavage of polynucleotide substrates" evidence="3">
    <location>
        <position position="59"/>
    </location>
</feature>
<feature type="site" description="Critical for catalytic activity" evidence="4">
    <location>
        <position position="61"/>
    </location>
</feature>
<feature type="glycosylation site" description="N-linked (GlcNAc...) asparagine" evidence="5">
    <location>
        <position position="100"/>
    </location>
</feature>
<feature type="disulfide bond" evidence="3">
    <location>
        <begin position="46"/>
        <end position="104"/>
    </location>
</feature>
<feature type="disulfide bond" evidence="3">
    <location>
        <begin position="60"/>
        <end position="114"/>
    </location>
</feature>
<feature type="disulfide bond" evidence="3">
    <location>
        <begin position="78"/>
        <end position="129"/>
    </location>
</feature>
<feature type="disulfide bond" evidence="3">
    <location>
        <begin position="85"/>
        <end position="92"/>
    </location>
</feature>
<name>RNAS6_PANTR</name>
<comment type="function">
    <text evidence="3">Ribonuclease which shows a preference for the pyrimidines uridine and cytosine. Has potent antibacterial activity against a range of Gram-positive and Gram-negative bacteria, including P.aeruginosa, A.baumanii, M.luteus, S.aureus, E.faecalis, E.faecium, S.saprophyticus and E.coli. Causes loss of bacterial membrane integrity, and also promotes agglutination of Gram-negative bacteria. Probably contributes to urinary tract sterility. Bactericidal activity is independent of RNase activity.</text>
</comment>
<comment type="subunit">
    <text evidence="3">Interacts (via N-terminus) with bacterial lipopolysaccharide (LPS).</text>
</comment>
<comment type="subcellular location">
    <subcellularLocation>
        <location evidence="3">Secreted</location>
    </subcellularLocation>
    <subcellularLocation>
        <location evidence="3">Lysosome</location>
    </subcellularLocation>
    <subcellularLocation>
        <location evidence="3">Cytoplasmic granule</location>
    </subcellularLocation>
</comment>
<comment type="similarity">
    <text evidence="6">Belongs to the pancreatic ribonuclease family.</text>
</comment>